<sequence length="183" mass="20904">MKKIKRDKIVGAGKISNYLLLIIMLGGGISFFIVGFLSYFKAFEHIALFSRFVNSDIRFIPQGITMIFYGTMAICLSIYIYFSIYYDIGAGYNEFNLISKKVVVFRKGFPGKNRLIKFVLPIPHLKSVKVMARGGINPKYEVFLYTKNLSRIPIGQVFKLSKLEYQASEIATFLGLAFEQYNL</sequence>
<dbReference type="EMBL" id="AF022186">
    <property type="protein sequence ID" value="AAF12998.1"/>
    <property type="molecule type" value="Genomic_DNA"/>
</dbReference>
<dbReference type="RefSeq" id="NP_045048.1">
    <property type="nucleotide sequence ID" value="NC_001840.1"/>
</dbReference>
<dbReference type="GeneID" id="800179"/>
<dbReference type="GO" id="GO:0009535">
    <property type="term" value="C:chloroplast thylakoid membrane"/>
    <property type="evidence" value="ECO:0007669"/>
    <property type="project" value="UniProtKB-SubCell"/>
</dbReference>
<dbReference type="GO" id="GO:0009522">
    <property type="term" value="C:photosystem I"/>
    <property type="evidence" value="ECO:0007669"/>
    <property type="project" value="InterPro"/>
</dbReference>
<dbReference type="GO" id="GO:0015979">
    <property type="term" value="P:photosynthesis"/>
    <property type="evidence" value="ECO:0007669"/>
    <property type="project" value="UniProtKB-UniRule"/>
</dbReference>
<dbReference type="HAMAP" id="MF_00437">
    <property type="entry name" value="Ycf4"/>
    <property type="match status" value="1"/>
</dbReference>
<dbReference type="InterPro" id="IPR003359">
    <property type="entry name" value="PSI_Ycf4_assembly"/>
</dbReference>
<dbReference type="Pfam" id="PF02392">
    <property type="entry name" value="Ycf4"/>
    <property type="match status" value="1"/>
</dbReference>
<accession>Q9TM19</accession>
<name>YCF4_CYACA</name>
<reference key="1">
    <citation type="journal article" date="2000" name="J. Mol. Evol.">
        <title>The structure and gene repertoire of an ancient red algal plastid genome.</title>
        <authorList>
            <person name="Gloeckner G."/>
            <person name="Rosenthal A."/>
            <person name="Valentin K.-U."/>
        </authorList>
    </citation>
    <scope>NUCLEOTIDE SEQUENCE [LARGE SCALE GENOMIC DNA]</scope>
    <source>
        <strain>RK-1</strain>
    </source>
</reference>
<geneLocation type="chloroplast"/>
<protein>
    <recommendedName>
        <fullName evidence="1">Photosystem I assembly protein Ycf4</fullName>
    </recommendedName>
</protein>
<feature type="chain" id="PRO_0000217603" description="Photosystem I assembly protein Ycf4">
    <location>
        <begin position="1"/>
        <end position="183"/>
    </location>
</feature>
<feature type="transmembrane region" description="Helical" evidence="1">
    <location>
        <begin position="17"/>
        <end position="39"/>
    </location>
</feature>
<feature type="transmembrane region" description="Helical" evidence="1">
    <location>
        <begin position="59"/>
        <end position="81"/>
    </location>
</feature>
<keyword id="KW-0150">Chloroplast</keyword>
<keyword id="KW-0472">Membrane</keyword>
<keyword id="KW-0602">Photosynthesis</keyword>
<keyword id="KW-0934">Plastid</keyword>
<keyword id="KW-0793">Thylakoid</keyword>
<keyword id="KW-0812">Transmembrane</keyword>
<keyword id="KW-1133">Transmembrane helix</keyword>
<organism>
    <name type="scientific">Cyanidium caldarium</name>
    <name type="common">Red alga</name>
    <dbReference type="NCBI Taxonomy" id="2771"/>
    <lineage>
        <taxon>Eukaryota</taxon>
        <taxon>Rhodophyta</taxon>
        <taxon>Bangiophyceae</taxon>
        <taxon>Cyanidiales</taxon>
        <taxon>Cyanidiaceae</taxon>
        <taxon>Cyanidium</taxon>
    </lineage>
</organism>
<gene>
    <name evidence="1" type="primary">ycf4</name>
    <name type="synonym">ycf54</name>
</gene>
<proteinExistence type="inferred from homology"/>
<evidence type="ECO:0000255" key="1">
    <source>
        <dbReference type="HAMAP-Rule" id="MF_00437"/>
    </source>
</evidence>
<comment type="function">
    <text evidence="1">Seems to be required for the assembly of the photosystem I complex.</text>
</comment>
<comment type="subcellular location">
    <subcellularLocation>
        <location evidence="1">Plastid</location>
        <location evidence="1">Chloroplast thylakoid membrane</location>
        <topology evidence="1">Multi-pass membrane protein</topology>
    </subcellularLocation>
</comment>
<comment type="similarity">
    <text evidence="1">Belongs to the Ycf4 family.</text>
</comment>